<proteinExistence type="inferred from homology"/>
<gene>
    <name evidence="1" type="primary">dnaJ</name>
    <name type="ordered locus">RL0151</name>
</gene>
<accession>Q1MN12</accession>
<protein>
    <recommendedName>
        <fullName evidence="1">Chaperone protein DnaJ</fullName>
    </recommendedName>
</protein>
<comment type="function">
    <text evidence="1">Participates actively in the response to hyperosmotic and heat shock by preventing the aggregation of stress-denatured proteins and by disaggregating proteins, also in an autonomous, DnaK-independent fashion. Unfolded proteins bind initially to DnaJ; upon interaction with the DnaJ-bound protein, DnaK hydrolyzes its bound ATP, resulting in the formation of a stable complex. GrpE releases ADP from DnaK; ATP binding to DnaK triggers the release of the substrate protein, thus completing the reaction cycle. Several rounds of ATP-dependent interactions between DnaJ, DnaK and GrpE are required for fully efficient folding. Also involved, together with DnaK and GrpE, in the DNA replication of plasmids through activation of initiation proteins.</text>
</comment>
<comment type="cofactor">
    <cofactor evidence="1">
        <name>Zn(2+)</name>
        <dbReference type="ChEBI" id="CHEBI:29105"/>
    </cofactor>
    <text evidence="1">Binds 2 Zn(2+) ions per monomer.</text>
</comment>
<comment type="subunit">
    <text evidence="1">Homodimer.</text>
</comment>
<comment type="subcellular location">
    <subcellularLocation>
        <location evidence="1">Cytoplasm</location>
    </subcellularLocation>
</comment>
<comment type="domain">
    <text evidence="1">The J domain is necessary and sufficient to stimulate DnaK ATPase activity. Zinc center 1 plays an important role in the autonomous, DnaK-independent chaperone activity of DnaJ. Zinc center 2 is essential for interaction with DnaK and for DnaJ activity.</text>
</comment>
<comment type="similarity">
    <text evidence="1">Belongs to the DnaJ family.</text>
</comment>
<feature type="chain" id="PRO_1000085265" description="Chaperone protein DnaJ">
    <location>
        <begin position="1"/>
        <end position="375"/>
    </location>
</feature>
<feature type="domain" description="J" evidence="1">
    <location>
        <begin position="5"/>
        <end position="70"/>
    </location>
</feature>
<feature type="repeat" description="CXXCXGXG motif">
    <location>
        <begin position="149"/>
        <end position="156"/>
    </location>
</feature>
<feature type="repeat" description="CXXCXGXG motif">
    <location>
        <begin position="166"/>
        <end position="173"/>
    </location>
</feature>
<feature type="repeat" description="CXXCXGXG motif">
    <location>
        <begin position="188"/>
        <end position="195"/>
    </location>
</feature>
<feature type="repeat" description="CXXCXGXG motif">
    <location>
        <begin position="202"/>
        <end position="209"/>
    </location>
</feature>
<feature type="zinc finger region" description="CR-type" evidence="1">
    <location>
        <begin position="136"/>
        <end position="214"/>
    </location>
</feature>
<feature type="binding site" evidence="1">
    <location>
        <position position="149"/>
    </location>
    <ligand>
        <name>Zn(2+)</name>
        <dbReference type="ChEBI" id="CHEBI:29105"/>
        <label>1</label>
    </ligand>
</feature>
<feature type="binding site" evidence="1">
    <location>
        <position position="152"/>
    </location>
    <ligand>
        <name>Zn(2+)</name>
        <dbReference type="ChEBI" id="CHEBI:29105"/>
        <label>1</label>
    </ligand>
</feature>
<feature type="binding site" evidence="1">
    <location>
        <position position="166"/>
    </location>
    <ligand>
        <name>Zn(2+)</name>
        <dbReference type="ChEBI" id="CHEBI:29105"/>
        <label>2</label>
    </ligand>
</feature>
<feature type="binding site" evidence="1">
    <location>
        <position position="169"/>
    </location>
    <ligand>
        <name>Zn(2+)</name>
        <dbReference type="ChEBI" id="CHEBI:29105"/>
        <label>2</label>
    </ligand>
</feature>
<feature type="binding site" evidence="1">
    <location>
        <position position="188"/>
    </location>
    <ligand>
        <name>Zn(2+)</name>
        <dbReference type="ChEBI" id="CHEBI:29105"/>
        <label>2</label>
    </ligand>
</feature>
<feature type="binding site" evidence="1">
    <location>
        <position position="191"/>
    </location>
    <ligand>
        <name>Zn(2+)</name>
        <dbReference type="ChEBI" id="CHEBI:29105"/>
        <label>2</label>
    </ligand>
</feature>
<feature type="binding site" evidence="1">
    <location>
        <position position="202"/>
    </location>
    <ligand>
        <name>Zn(2+)</name>
        <dbReference type="ChEBI" id="CHEBI:29105"/>
        <label>1</label>
    </ligand>
</feature>
<feature type="binding site" evidence="1">
    <location>
        <position position="205"/>
    </location>
    <ligand>
        <name>Zn(2+)</name>
        <dbReference type="ChEBI" id="CHEBI:29105"/>
        <label>1</label>
    </ligand>
</feature>
<name>DNAJ_RHIJ3</name>
<sequence length="375" mass="40847">MAKADFYETLGVAKSADEKELKSAFRKLAMKYHPDKNPDDKDAERKFKEINEAYEMLKDPQKRAAYDRYGHAAFEHGGMGGGGGGFAGGGFSDIFEDIFGEMMGGGRARQRSSGGRERGADLRYNMEITLEESFSGKTAQIRVPTSITCDVCSGSGAKPGTQPKNCGTCQGTGRVRAAQGFFSIERTCPTCHGRGQIIPDPCPKCHGQGRVTEERSLSVNIPAGIEDGTRIRLQGEGEAGARGGPAGDLYIFLSVKPHEFYQRDGADLYCAVPISMTTAALGGTFDVATLDGTKSRVTVPEGTQVGKQFRLKGKGMPVLRSVQTGDLYIQIQIETPQKLTKRQRELLQEFEQLSSKENNPESTGFFARMKEFFEG</sequence>
<evidence type="ECO:0000255" key="1">
    <source>
        <dbReference type="HAMAP-Rule" id="MF_01152"/>
    </source>
</evidence>
<dbReference type="EMBL" id="AM236080">
    <property type="protein sequence ID" value="CAK05640.1"/>
    <property type="molecule type" value="Genomic_DNA"/>
</dbReference>
<dbReference type="RefSeq" id="WP_011649969.1">
    <property type="nucleotide sequence ID" value="NC_008380.1"/>
</dbReference>
<dbReference type="SMR" id="Q1MN12"/>
<dbReference type="EnsemblBacteria" id="CAK05640">
    <property type="protein sequence ID" value="CAK05640"/>
    <property type="gene ID" value="RL0151"/>
</dbReference>
<dbReference type="GeneID" id="84667707"/>
<dbReference type="KEGG" id="rle:RL0151"/>
<dbReference type="eggNOG" id="COG0484">
    <property type="taxonomic scope" value="Bacteria"/>
</dbReference>
<dbReference type="HOGENOM" id="CLU_017633_0_7_5"/>
<dbReference type="Proteomes" id="UP000006575">
    <property type="component" value="Chromosome"/>
</dbReference>
<dbReference type="GO" id="GO:0005737">
    <property type="term" value="C:cytoplasm"/>
    <property type="evidence" value="ECO:0007669"/>
    <property type="project" value="UniProtKB-SubCell"/>
</dbReference>
<dbReference type="GO" id="GO:0005524">
    <property type="term" value="F:ATP binding"/>
    <property type="evidence" value="ECO:0007669"/>
    <property type="project" value="InterPro"/>
</dbReference>
<dbReference type="GO" id="GO:0031072">
    <property type="term" value="F:heat shock protein binding"/>
    <property type="evidence" value="ECO:0007669"/>
    <property type="project" value="InterPro"/>
</dbReference>
<dbReference type="GO" id="GO:0051082">
    <property type="term" value="F:unfolded protein binding"/>
    <property type="evidence" value="ECO:0007669"/>
    <property type="project" value="UniProtKB-UniRule"/>
</dbReference>
<dbReference type="GO" id="GO:0008270">
    <property type="term" value="F:zinc ion binding"/>
    <property type="evidence" value="ECO:0007669"/>
    <property type="project" value="UniProtKB-UniRule"/>
</dbReference>
<dbReference type="GO" id="GO:0051085">
    <property type="term" value="P:chaperone cofactor-dependent protein refolding"/>
    <property type="evidence" value="ECO:0007669"/>
    <property type="project" value="TreeGrafter"/>
</dbReference>
<dbReference type="GO" id="GO:0006260">
    <property type="term" value="P:DNA replication"/>
    <property type="evidence" value="ECO:0007669"/>
    <property type="project" value="UniProtKB-KW"/>
</dbReference>
<dbReference type="GO" id="GO:0042026">
    <property type="term" value="P:protein refolding"/>
    <property type="evidence" value="ECO:0007669"/>
    <property type="project" value="TreeGrafter"/>
</dbReference>
<dbReference type="GO" id="GO:0009408">
    <property type="term" value="P:response to heat"/>
    <property type="evidence" value="ECO:0007669"/>
    <property type="project" value="InterPro"/>
</dbReference>
<dbReference type="CDD" id="cd06257">
    <property type="entry name" value="DnaJ"/>
    <property type="match status" value="1"/>
</dbReference>
<dbReference type="CDD" id="cd10747">
    <property type="entry name" value="DnaJ_C"/>
    <property type="match status" value="1"/>
</dbReference>
<dbReference type="CDD" id="cd10719">
    <property type="entry name" value="DnaJ_zf"/>
    <property type="match status" value="1"/>
</dbReference>
<dbReference type="FunFam" id="1.10.287.110:FF:000034">
    <property type="entry name" value="Chaperone protein DnaJ"/>
    <property type="match status" value="1"/>
</dbReference>
<dbReference type="FunFam" id="2.10.230.10:FF:000002">
    <property type="entry name" value="Molecular chaperone DnaJ"/>
    <property type="match status" value="1"/>
</dbReference>
<dbReference type="FunFam" id="2.60.260.20:FF:000004">
    <property type="entry name" value="Molecular chaperone DnaJ"/>
    <property type="match status" value="1"/>
</dbReference>
<dbReference type="Gene3D" id="1.10.287.110">
    <property type="entry name" value="DnaJ domain"/>
    <property type="match status" value="1"/>
</dbReference>
<dbReference type="Gene3D" id="2.10.230.10">
    <property type="entry name" value="Heat shock protein DnaJ, cysteine-rich domain"/>
    <property type="match status" value="1"/>
</dbReference>
<dbReference type="Gene3D" id="2.60.260.20">
    <property type="entry name" value="Urease metallochaperone UreE, N-terminal domain"/>
    <property type="match status" value="2"/>
</dbReference>
<dbReference type="HAMAP" id="MF_01152">
    <property type="entry name" value="DnaJ"/>
    <property type="match status" value="1"/>
</dbReference>
<dbReference type="InterPro" id="IPR012724">
    <property type="entry name" value="DnaJ"/>
</dbReference>
<dbReference type="InterPro" id="IPR002939">
    <property type="entry name" value="DnaJ_C"/>
</dbReference>
<dbReference type="InterPro" id="IPR001623">
    <property type="entry name" value="DnaJ_domain"/>
</dbReference>
<dbReference type="InterPro" id="IPR018253">
    <property type="entry name" value="DnaJ_domain_CS"/>
</dbReference>
<dbReference type="InterPro" id="IPR008971">
    <property type="entry name" value="HSP40/DnaJ_pept-bd"/>
</dbReference>
<dbReference type="InterPro" id="IPR001305">
    <property type="entry name" value="HSP_DnaJ_Cys-rich_dom"/>
</dbReference>
<dbReference type="InterPro" id="IPR036410">
    <property type="entry name" value="HSP_DnaJ_Cys-rich_dom_sf"/>
</dbReference>
<dbReference type="InterPro" id="IPR036869">
    <property type="entry name" value="J_dom_sf"/>
</dbReference>
<dbReference type="NCBIfam" id="TIGR02349">
    <property type="entry name" value="DnaJ_bact"/>
    <property type="match status" value="1"/>
</dbReference>
<dbReference type="NCBIfam" id="NF008035">
    <property type="entry name" value="PRK10767.1"/>
    <property type="match status" value="1"/>
</dbReference>
<dbReference type="PANTHER" id="PTHR43096:SF48">
    <property type="entry name" value="CHAPERONE PROTEIN DNAJ"/>
    <property type="match status" value="1"/>
</dbReference>
<dbReference type="PANTHER" id="PTHR43096">
    <property type="entry name" value="DNAJ HOMOLOG 1, MITOCHONDRIAL-RELATED"/>
    <property type="match status" value="1"/>
</dbReference>
<dbReference type="Pfam" id="PF00226">
    <property type="entry name" value="DnaJ"/>
    <property type="match status" value="1"/>
</dbReference>
<dbReference type="Pfam" id="PF01556">
    <property type="entry name" value="DnaJ_C"/>
    <property type="match status" value="1"/>
</dbReference>
<dbReference type="Pfam" id="PF00684">
    <property type="entry name" value="DnaJ_CXXCXGXG"/>
    <property type="match status" value="1"/>
</dbReference>
<dbReference type="PRINTS" id="PR00625">
    <property type="entry name" value="JDOMAIN"/>
</dbReference>
<dbReference type="SMART" id="SM00271">
    <property type="entry name" value="DnaJ"/>
    <property type="match status" value="1"/>
</dbReference>
<dbReference type="SUPFAM" id="SSF46565">
    <property type="entry name" value="Chaperone J-domain"/>
    <property type="match status" value="1"/>
</dbReference>
<dbReference type="SUPFAM" id="SSF57938">
    <property type="entry name" value="DnaJ/Hsp40 cysteine-rich domain"/>
    <property type="match status" value="1"/>
</dbReference>
<dbReference type="SUPFAM" id="SSF49493">
    <property type="entry name" value="HSP40/DnaJ peptide-binding domain"/>
    <property type="match status" value="2"/>
</dbReference>
<dbReference type="PROSITE" id="PS00636">
    <property type="entry name" value="DNAJ_1"/>
    <property type="match status" value="1"/>
</dbReference>
<dbReference type="PROSITE" id="PS50076">
    <property type="entry name" value="DNAJ_2"/>
    <property type="match status" value="1"/>
</dbReference>
<dbReference type="PROSITE" id="PS51188">
    <property type="entry name" value="ZF_CR"/>
    <property type="match status" value="1"/>
</dbReference>
<keyword id="KW-0143">Chaperone</keyword>
<keyword id="KW-0963">Cytoplasm</keyword>
<keyword id="KW-0235">DNA replication</keyword>
<keyword id="KW-0479">Metal-binding</keyword>
<keyword id="KW-0677">Repeat</keyword>
<keyword id="KW-0346">Stress response</keyword>
<keyword id="KW-0862">Zinc</keyword>
<keyword id="KW-0863">Zinc-finger</keyword>
<reference key="1">
    <citation type="journal article" date="2006" name="Genome Biol.">
        <title>The genome of Rhizobium leguminosarum has recognizable core and accessory components.</title>
        <authorList>
            <person name="Young J.P.W."/>
            <person name="Crossman L.C."/>
            <person name="Johnston A.W.B."/>
            <person name="Thomson N.R."/>
            <person name="Ghazoui Z.F."/>
            <person name="Hull K.H."/>
            <person name="Wexler M."/>
            <person name="Curson A.R.J."/>
            <person name="Todd J.D."/>
            <person name="Poole P.S."/>
            <person name="Mauchline T.H."/>
            <person name="East A.K."/>
            <person name="Quail M.A."/>
            <person name="Churcher C."/>
            <person name="Arrowsmith C."/>
            <person name="Cherevach I."/>
            <person name="Chillingworth T."/>
            <person name="Clarke K."/>
            <person name="Cronin A."/>
            <person name="Davis P."/>
            <person name="Fraser A."/>
            <person name="Hance Z."/>
            <person name="Hauser H."/>
            <person name="Jagels K."/>
            <person name="Moule S."/>
            <person name="Mungall K."/>
            <person name="Norbertczak H."/>
            <person name="Rabbinowitsch E."/>
            <person name="Sanders M."/>
            <person name="Simmonds M."/>
            <person name="Whitehead S."/>
            <person name="Parkhill J."/>
        </authorList>
    </citation>
    <scope>NUCLEOTIDE SEQUENCE [LARGE SCALE GENOMIC DNA]</scope>
    <source>
        <strain>DSM 114642 / LMG 32736 / 3841</strain>
    </source>
</reference>
<organism>
    <name type="scientific">Rhizobium johnstonii (strain DSM 114642 / LMG 32736 / 3841)</name>
    <name type="common">Rhizobium leguminosarum bv. viciae</name>
    <dbReference type="NCBI Taxonomy" id="216596"/>
    <lineage>
        <taxon>Bacteria</taxon>
        <taxon>Pseudomonadati</taxon>
        <taxon>Pseudomonadota</taxon>
        <taxon>Alphaproteobacteria</taxon>
        <taxon>Hyphomicrobiales</taxon>
        <taxon>Rhizobiaceae</taxon>
        <taxon>Rhizobium/Agrobacterium group</taxon>
        <taxon>Rhizobium</taxon>
        <taxon>Rhizobium johnstonii</taxon>
    </lineage>
</organism>